<organism>
    <name type="scientific">Oryza sativa subsp. indica</name>
    <name type="common">Rice</name>
    <dbReference type="NCBI Taxonomy" id="39946"/>
    <lineage>
        <taxon>Eukaryota</taxon>
        <taxon>Viridiplantae</taxon>
        <taxon>Streptophyta</taxon>
        <taxon>Embryophyta</taxon>
        <taxon>Tracheophyta</taxon>
        <taxon>Spermatophyta</taxon>
        <taxon>Magnoliopsida</taxon>
        <taxon>Liliopsida</taxon>
        <taxon>Poales</taxon>
        <taxon>Poaceae</taxon>
        <taxon>BOP clade</taxon>
        <taxon>Oryzoideae</taxon>
        <taxon>Oryzeae</taxon>
        <taxon>Oryzinae</taxon>
        <taxon>Oryza</taxon>
        <taxon>Oryza sativa</taxon>
    </lineage>
</organism>
<reference key="1">
    <citation type="thesis" date="1995" institute="Fudan University" country="China">
        <authorList>
            <person name="Xiao C."/>
        </authorList>
    </citation>
    <scope>NUCLEOTIDE SEQUENCE [MRNA]</scope>
    <source>
        <strain>cv. Guang-Lu-Ai No.4</strain>
        <tissue>Shoot</tissue>
    </source>
</reference>
<reference key="2">
    <citation type="journal article" date="2005" name="PLoS Biol.">
        <title>The genomes of Oryza sativa: a history of duplications.</title>
        <authorList>
            <person name="Yu J."/>
            <person name="Wang J."/>
            <person name="Lin W."/>
            <person name="Li S."/>
            <person name="Li H."/>
            <person name="Zhou J."/>
            <person name="Ni P."/>
            <person name="Dong W."/>
            <person name="Hu S."/>
            <person name="Zeng C."/>
            <person name="Zhang J."/>
            <person name="Zhang Y."/>
            <person name="Li R."/>
            <person name="Xu Z."/>
            <person name="Li S."/>
            <person name="Li X."/>
            <person name="Zheng H."/>
            <person name="Cong L."/>
            <person name="Lin L."/>
            <person name="Yin J."/>
            <person name="Geng J."/>
            <person name="Li G."/>
            <person name="Shi J."/>
            <person name="Liu J."/>
            <person name="Lv H."/>
            <person name="Li J."/>
            <person name="Wang J."/>
            <person name="Deng Y."/>
            <person name="Ran L."/>
            <person name="Shi X."/>
            <person name="Wang X."/>
            <person name="Wu Q."/>
            <person name="Li C."/>
            <person name="Ren X."/>
            <person name="Wang J."/>
            <person name="Wang X."/>
            <person name="Li D."/>
            <person name="Liu D."/>
            <person name="Zhang X."/>
            <person name="Ji Z."/>
            <person name="Zhao W."/>
            <person name="Sun Y."/>
            <person name="Zhang Z."/>
            <person name="Bao J."/>
            <person name="Han Y."/>
            <person name="Dong L."/>
            <person name="Ji J."/>
            <person name="Chen P."/>
            <person name="Wu S."/>
            <person name="Liu J."/>
            <person name="Xiao Y."/>
            <person name="Bu D."/>
            <person name="Tan J."/>
            <person name="Yang L."/>
            <person name="Ye C."/>
            <person name="Zhang J."/>
            <person name="Xu J."/>
            <person name="Zhou Y."/>
            <person name="Yu Y."/>
            <person name="Zhang B."/>
            <person name="Zhuang S."/>
            <person name="Wei H."/>
            <person name="Liu B."/>
            <person name="Lei M."/>
            <person name="Yu H."/>
            <person name="Li Y."/>
            <person name="Xu H."/>
            <person name="Wei S."/>
            <person name="He X."/>
            <person name="Fang L."/>
            <person name="Zhang Z."/>
            <person name="Zhang Y."/>
            <person name="Huang X."/>
            <person name="Su Z."/>
            <person name="Tong W."/>
            <person name="Li J."/>
            <person name="Tong Z."/>
            <person name="Li S."/>
            <person name="Ye J."/>
            <person name="Wang L."/>
            <person name="Fang L."/>
            <person name="Lei T."/>
            <person name="Chen C.-S."/>
            <person name="Chen H.-C."/>
            <person name="Xu Z."/>
            <person name="Li H."/>
            <person name="Huang H."/>
            <person name="Zhang F."/>
            <person name="Xu H."/>
            <person name="Li N."/>
            <person name="Zhao C."/>
            <person name="Li S."/>
            <person name="Dong L."/>
            <person name="Huang Y."/>
            <person name="Li L."/>
            <person name="Xi Y."/>
            <person name="Qi Q."/>
            <person name="Li W."/>
            <person name="Zhang B."/>
            <person name="Hu W."/>
            <person name="Zhang Y."/>
            <person name="Tian X."/>
            <person name="Jiao Y."/>
            <person name="Liang X."/>
            <person name="Jin J."/>
            <person name="Gao L."/>
            <person name="Zheng W."/>
            <person name="Hao B."/>
            <person name="Liu S.-M."/>
            <person name="Wang W."/>
            <person name="Yuan L."/>
            <person name="Cao M."/>
            <person name="McDermott J."/>
            <person name="Samudrala R."/>
            <person name="Wang J."/>
            <person name="Wong G.K.-S."/>
            <person name="Yang H."/>
        </authorList>
    </citation>
    <scope>NUCLEOTIDE SEQUENCE [LARGE SCALE GENOMIC DNA]</scope>
    <source>
        <strain>cv. 93-11</strain>
    </source>
</reference>
<sequence>MSSVFSGDETAPFFGFLGAASALIFSCMGAAYGTAKSGVGVASMGVMRPELVMKSIVPVVMAGVLGIYGLIIAVIISTGINPKAKPYYLFDGYAHLSSGLACGLAGLAAGMAIGIVGDAGVRANAQQPKLFVGMILILIFAEALALYGLIVGIILSSRAGQSRAD</sequence>
<dbReference type="EMBL" id="U27098">
    <property type="protein sequence ID" value="AAA68175.1"/>
    <property type="molecule type" value="mRNA"/>
</dbReference>
<dbReference type="EMBL" id="CM000136">
    <property type="protein sequence ID" value="EAY80099.1"/>
    <property type="molecule type" value="Genomic_DNA"/>
</dbReference>
<dbReference type="SMR" id="A2ZBW5"/>
<dbReference type="STRING" id="39946.A2ZBW5"/>
<dbReference type="EnsemblPlants" id="BGIOSGA034426-TA">
    <property type="protein sequence ID" value="BGIOSGA034426-PA"/>
    <property type="gene ID" value="BGIOSGA034426"/>
</dbReference>
<dbReference type="EnsemblPlants" id="OsGoSa_11g0004640.01">
    <property type="protein sequence ID" value="OsGoSa_11g0004640.01"/>
    <property type="gene ID" value="OsGoSa_11g0004640"/>
</dbReference>
<dbReference type="EnsemblPlants" id="OsIR64_11g0004640.01">
    <property type="protein sequence ID" value="OsIR64_11g0004640.01"/>
    <property type="gene ID" value="OsIR64_11g0004640"/>
</dbReference>
<dbReference type="EnsemblPlants" id="OsKYG_11g0004640.01">
    <property type="protein sequence ID" value="OsKYG_11g0004640.01"/>
    <property type="gene ID" value="OsKYG_11g0004640"/>
</dbReference>
<dbReference type="EnsemblPlants" id="OsLaMu_11g0004650.01">
    <property type="protein sequence ID" value="OsLaMu_11g0004650.01"/>
    <property type="gene ID" value="OsLaMu_11g0004650"/>
</dbReference>
<dbReference type="EnsemblPlants" id="OsLima_11g0004570.01">
    <property type="protein sequence ID" value="OsLima_11g0004570.01"/>
    <property type="gene ID" value="OsLima_11g0004570"/>
</dbReference>
<dbReference type="EnsemblPlants" id="OsLiXu_11g0004610.01">
    <property type="protein sequence ID" value="OsLiXu_11g0004610.01"/>
    <property type="gene ID" value="OsLiXu_11g0004610"/>
</dbReference>
<dbReference type="EnsemblPlants" id="OsMH63_11G004710_01">
    <property type="protein sequence ID" value="OsMH63_11G004710_01"/>
    <property type="gene ID" value="OsMH63_11G004710"/>
</dbReference>
<dbReference type="EnsemblPlants" id="OsPr106_11g0004560.01">
    <property type="protein sequence ID" value="OsPr106_11g0004560.01"/>
    <property type="gene ID" value="OsPr106_11g0004560"/>
</dbReference>
<dbReference type="EnsemblPlants" id="OsZS97_11G004700_01">
    <property type="protein sequence ID" value="OsZS97_11G004700_01"/>
    <property type="gene ID" value="OsZS97_11G004700"/>
</dbReference>
<dbReference type="Gramene" id="BGIOSGA034426-TA">
    <property type="protein sequence ID" value="BGIOSGA034426-PA"/>
    <property type="gene ID" value="BGIOSGA034426"/>
</dbReference>
<dbReference type="Gramene" id="OsGoSa_11g0004640.01">
    <property type="protein sequence ID" value="OsGoSa_11g0004640.01"/>
    <property type="gene ID" value="OsGoSa_11g0004640"/>
</dbReference>
<dbReference type="Gramene" id="OsIR64_11g0004640.01">
    <property type="protein sequence ID" value="OsIR64_11g0004640.01"/>
    <property type="gene ID" value="OsIR64_11g0004640"/>
</dbReference>
<dbReference type="Gramene" id="OsKYG_11g0004640.01">
    <property type="protein sequence ID" value="OsKYG_11g0004640.01"/>
    <property type="gene ID" value="OsKYG_11g0004640"/>
</dbReference>
<dbReference type="Gramene" id="OsLaMu_11g0004650.01">
    <property type="protein sequence ID" value="OsLaMu_11g0004650.01"/>
    <property type="gene ID" value="OsLaMu_11g0004650"/>
</dbReference>
<dbReference type="Gramene" id="OsLima_11g0004570.01">
    <property type="protein sequence ID" value="OsLima_11g0004570.01"/>
    <property type="gene ID" value="OsLima_11g0004570"/>
</dbReference>
<dbReference type="Gramene" id="OsLiXu_11g0004610.01">
    <property type="protein sequence ID" value="OsLiXu_11g0004610.01"/>
    <property type="gene ID" value="OsLiXu_11g0004610"/>
</dbReference>
<dbReference type="Gramene" id="OsMH63_11G004710_01">
    <property type="protein sequence ID" value="OsMH63_11G004710_01"/>
    <property type="gene ID" value="OsMH63_11G004710"/>
</dbReference>
<dbReference type="Gramene" id="OsPr106_11g0004560.01">
    <property type="protein sequence ID" value="OsPr106_11g0004560.01"/>
    <property type="gene ID" value="OsPr106_11g0004560"/>
</dbReference>
<dbReference type="Gramene" id="OsZS97_11G004700_01">
    <property type="protein sequence ID" value="OsZS97_11G004700_01"/>
    <property type="gene ID" value="OsZS97_11G004700"/>
</dbReference>
<dbReference type="HOGENOM" id="CLU_085752_1_0_1"/>
<dbReference type="OMA" id="WILHESG"/>
<dbReference type="OrthoDB" id="2015590at2759"/>
<dbReference type="Proteomes" id="UP000007015">
    <property type="component" value="Chromosome 11"/>
</dbReference>
<dbReference type="GO" id="GO:0033179">
    <property type="term" value="C:proton-transporting V-type ATPase, V0 domain"/>
    <property type="evidence" value="ECO:0007669"/>
    <property type="project" value="InterPro"/>
</dbReference>
<dbReference type="GO" id="GO:0005774">
    <property type="term" value="C:vacuolar membrane"/>
    <property type="evidence" value="ECO:0007669"/>
    <property type="project" value="UniProtKB-SubCell"/>
</dbReference>
<dbReference type="GO" id="GO:0046961">
    <property type="term" value="F:proton-transporting ATPase activity, rotational mechanism"/>
    <property type="evidence" value="ECO:0007669"/>
    <property type="project" value="InterPro"/>
</dbReference>
<dbReference type="CDD" id="cd18175">
    <property type="entry name" value="ATP-synt_Vo_c_ATP6C_rpt1"/>
    <property type="match status" value="1"/>
</dbReference>
<dbReference type="CDD" id="cd18176">
    <property type="entry name" value="ATP-synt_Vo_c_ATP6C_rpt2"/>
    <property type="match status" value="1"/>
</dbReference>
<dbReference type="FunFam" id="1.20.120.610:FF:000003">
    <property type="entry name" value="V-type proton ATPase proteolipid subunit"/>
    <property type="match status" value="1"/>
</dbReference>
<dbReference type="Gene3D" id="1.20.120.610">
    <property type="entry name" value="lithium bound rotor ring of v- atpase"/>
    <property type="match status" value="1"/>
</dbReference>
<dbReference type="InterPro" id="IPR002379">
    <property type="entry name" value="ATPase_proteolipid_c-like_dom"/>
</dbReference>
<dbReference type="InterPro" id="IPR000245">
    <property type="entry name" value="ATPase_proteolipid_csu"/>
</dbReference>
<dbReference type="InterPro" id="IPR011555">
    <property type="entry name" value="ATPase_proteolipid_su_C_euk"/>
</dbReference>
<dbReference type="InterPro" id="IPR035921">
    <property type="entry name" value="F/V-ATP_Csub_sf"/>
</dbReference>
<dbReference type="NCBIfam" id="TIGR01100">
    <property type="entry name" value="V_ATP_synt_C"/>
    <property type="match status" value="1"/>
</dbReference>
<dbReference type="PANTHER" id="PTHR10263">
    <property type="entry name" value="V-TYPE PROTON ATPASE PROTEOLIPID SUBUNIT"/>
    <property type="match status" value="1"/>
</dbReference>
<dbReference type="Pfam" id="PF00137">
    <property type="entry name" value="ATP-synt_C"/>
    <property type="match status" value="2"/>
</dbReference>
<dbReference type="PRINTS" id="PR00122">
    <property type="entry name" value="VACATPASE"/>
</dbReference>
<dbReference type="SUPFAM" id="SSF81333">
    <property type="entry name" value="F1F0 ATP synthase subunit C"/>
    <property type="match status" value="2"/>
</dbReference>
<gene>
    <name type="primary">VATP-P1</name>
    <name type="ORF">OsI_034058</name>
</gene>
<name>VATL_ORYSI</name>
<evidence type="ECO:0000250" key="1"/>
<evidence type="ECO:0000255" key="2"/>
<evidence type="ECO:0000305" key="3"/>
<accession>A2ZBW5</accession>
<accession>Q40635</accession>
<accession>Q53JH4</accession>
<feature type="chain" id="PRO_0000291394" description="V-type proton ATPase 16 kDa proteolipid subunit">
    <location>
        <begin position="1"/>
        <end position="165"/>
    </location>
</feature>
<feature type="topological domain" description="Lumenal" evidence="2">
    <location>
        <begin position="1"/>
        <end position="10"/>
    </location>
</feature>
<feature type="transmembrane region" description="Helical" evidence="2">
    <location>
        <begin position="11"/>
        <end position="33"/>
    </location>
</feature>
<feature type="topological domain" description="Cytoplasmic" evidence="2">
    <location>
        <begin position="34"/>
        <end position="55"/>
    </location>
</feature>
<feature type="transmembrane region" description="Helical" evidence="2">
    <location>
        <begin position="56"/>
        <end position="76"/>
    </location>
</feature>
<feature type="topological domain" description="Lumenal" evidence="2">
    <location>
        <begin position="77"/>
        <end position="95"/>
    </location>
</feature>
<feature type="transmembrane region" description="Helical" evidence="2">
    <location>
        <begin position="96"/>
        <end position="117"/>
    </location>
</feature>
<feature type="topological domain" description="Cytoplasmic" evidence="2">
    <location>
        <begin position="118"/>
        <end position="129"/>
    </location>
</feature>
<feature type="transmembrane region" description="Helical" evidence="2">
    <location>
        <begin position="130"/>
        <end position="155"/>
    </location>
</feature>
<feature type="topological domain" description="Lumenal" evidence="2">
    <location>
        <begin position="156"/>
        <end position="165"/>
    </location>
</feature>
<feature type="site" description="Essential for proton translocation" evidence="1">
    <location>
        <position position="142"/>
    </location>
</feature>
<proteinExistence type="evidence at transcript level"/>
<keyword id="KW-0375">Hydrogen ion transport</keyword>
<keyword id="KW-0406">Ion transport</keyword>
<keyword id="KW-0472">Membrane</keyword>
<keyword id="KW-1185">Reference proteome</keyword>
<keyword id="KW-0812">Transmembrane</keyword>
<keyword id="KW-1133">Transmembrane helix</keyword>
<keyword id="KW-0813">Transport</keyword>
<keyword id="KW-0926">Vacuole</keyword>
<protein>
    <recommendedName>
        <fullName>V-type proton ATPase 16 kDa proteolipid subunit</fullName>
        <shortName>V-ATPase 16 kDa proteolipid subunit</shortName>
    </recommendedName>
    <alternativeName>
        <fullName>Vacuolar proton pump 16 kDa proteolipid subunit</fullName>
    </alternativeName>
</protein>
<comment type="function">
    <text>Proton-conducting pore forming subunit of the membrane integral V0 complex of vacuolar ATPase. V-ATPase is responsible for acidifying a variety of intracellular compartments in eukaryotic cells.</text>
</comment>
<comment type="subunit">
    <text>V-ATPase is a heteromultimeric enzyme composed of a peripheral catalytic V1 complex (main components: subunits A, B, C, D, E, and F) attached to an integral membrane V0 proton pore complex (main component: the proteolipid protein; which is present as a hexamer that forms the proton-conducting pore).</text>
</comment>
<comment type="subcellular location">
    <subcellularLocation>
        <location>Vacuole membrane</location>
        <topology>Multi-pass membrane protein</topology>
    </subcellularLocation>
    <text>Tonoplast.</text>
</comment>
<comment type="similarity">
    <text evidence="3">Belongs to the V-ATPase proteolipid subunit family.</text>
</comment>